<name>GATY_SHIFL</name>
<reference key="1">
    <citation type="journal article" date="2002" name="Nucleic Acids Res.">
        <title>Genome sequence of Shigella flexneri 2a: insights into pathogenicity through comparison with genomes of Escherichia coli K12 and O157.</title>
        <authorList>
            <person name="Jin Q."/>
            <person name="Yuan Z."/>
            <person name="Xu J."/>
            <person name="Wang Y."/>
            <person name="Shen Y."/>
            <person name="Lu W."/>
            <person name="Wang J."/>
            <person name="Liu H."/>
            <person name="Yang J."/>
            <person name="Yang F."/>
            <person name="Zhang X."/>
            <person name="Zhang J."/>
            <person name="Yang G."/>
            <person name="Wu H."/>
            <person name="Qu D."/>
            <person name="Dong J."/>
            <person name="Sun L."/>
            <person name="Xue Y."/>
            <person name="Zhao A."/>
            <person name="Gao Y."/>
            <person name="Zhu J."/>
            <person name="Kan B."/>
            <person name="Ding K."/>
            <person name="Chen S."/>
            <person name="Cheng H."/>
            <person name="Yao Z."/>
            <person name="He B."/>
            <person name="Chen R."/>
            <person name="Ma D."/>
            <person name="Qiang B."/>
            <person name="Wen Y."/>
            <person name="Hou Y."/>
            <person name="Yu J."/>
        </authorList>
    </citation>
    <scope>NUCLEOTIDE SEQUENCE [LARGE SCALE GENOMIC DNA]</scope>
    <source>
        <strain>301 / Serotype 2a</strain>
    </source>
</reference>
<reference key="2">
    <citation type="journal article" date="2003" name="Infect. Immun.">
        <title>Complete genome sequence and comparative genomics of Shigella flexneri serotype 2a strain 2457T.</title>
        <authorList>
            <person name="Wei J."/>
            <person name="Goldberg M.B."/>
            <person name="Burland V."/>
            <person name="Venkatesan M.M."/>
            <person name="Deng W."/>
            <person name="Fournier G."/>
            <person name="Mayhew G.F."/>
            <person name="Plunkett G. III"/>
            <person name="Rose D.J."/>
            <person name="Darling A."/>
            <person name="Mau B."/>
            <person name="Perna N.T."/>
            <person name="Payne S.M."/>
            <person name="Runyen-Janecky L.J."/>
            <person name="Zhou S."/>
            <person name="Schwartz D.C."/>
            <person name="Blattner F.R."/>
        </authorList>
    </citation>
    <scope>NUCLEOTIDE SEQUENCE [LARGE SCALE GENOMIC DNA]</scope>
    <source>
        <strain>ATCC 700930 / 2457T / Serotype 2a</strain>
    </source>
</reference>
<evidence type="ECO:0000255" key="1">
    <source>
        <dbReference type="HAMAP-Rule" id="MF_01294"/>
    </source>
</evidence>
<organism>
    <name type="scientific">Shigella flexneri</name>
    <dbReference type="NCBI Taxonomy" id="623"/>
    <lineage>
        <taxon>Bacteria</taxon>
        <taxon>Pseudomonadati</taxon>
        <taxon>Pseudomonadota</taxon>
        <taxon>Gammaproteobacteria</taxon>
        <taxon>Enterobacterales</taxon>
        <taxon>Enterobacteriaceae</taxon>
        <taxon>Shigella</taxon>
    </lineage>
</organism>
<sequence>MYVVSTKQMLNNAQRGGYAVPAFNIHNLETMQVVVETAANLHAPVIIAGTPGTFTHAGTENLLALVSAMAKQYHHPLAIHLDHHTKFDDIAQKVRSGVRSVMIDASHLPFAQNISRVKEVVDFCHRFDVSVEAELGQLGGQEDDVQVNEVDALYTNPAQAREFAEATGIDSLAVAIGTAHGMYASAPVLDFSRLENIRQWVNLPLVLHGASGLSTKDIQQTIKLGICKINVATELKNAFLQSLKNYLTEHPEATDPRDYLQSAKSAMRDVVSKVIADCGCEGRA</sequence>
<protein>
    <recommendedName>
        <fullName evidence="1">D-tagatose-1,6-bisphosphate aldolase subunit GatY</fullName>
        <shortName evidence="1">TBPA</shortName>
        <shortName evidence="1">TagBP aldolase</shortName>
        <ecNumber evidence="1">4.1.2.40</ecNumber>
    </recommendedName>
    <alternativeName>
        <fullName evidence="1">D-tagatose-bisphosphate aldolase class II</fullName>
    </alternativeName>
    <alternativeName>
        <fullName evidence="1">Tagatose-bisphosphate aldolase</fullName>
    </alternativeName>
</protein>
<keyword id="KW-0298">Galactitol metabolism</keyword>
<keyword id="KW-0456">Lyase</keyword>
<keyword id="KW-0479">Metal-binding</keyword>
<keyword id="KW-1185">Reference proteome</keyword>
<keyword id="KW-0862">Zinc</keyword>
<feature type="chain" id="PRO_0000355356" description="D-tagatose-1,6-bisphosphate aldolase subunit GatY">
    <location>
        <begin position="1"/>
        <end position="284"/>
    </location>
</feature>
<feature type="active site" description="Proton donor" evidence="1">
    <location>
        <position position="82"/>
    </location>
</feature>
<feature type="binding site" evidence="1">
    <location>
        <position position="83"/>
    </location>
    <ligand>
        <name>Zn(2+)</name>
        <dbReference type="ChEBI" id="CHEBI:29105"/>
        <note>catalytic</note>
    </ligand>
</feature>
<feature type="binding site" evidence="1">
    <location>
        <position position="180"/>
    </location>
    <ligand>
        <name>Zn(2+)</name>
        <dbReference type="ChEBI" id="CHEBI:29105"/>
        <note>catalytic</note>
    </ligand>
</feature>
<feature type="binding site" evidence="1">
    <location>
        <position position="181"/>
    </location>
    <ligand>
        <name>dihydroxyacetone phosphate</name>
        <dbReference type="ChEBI" id="CHEBI:57642"/>
    </ligand>
</feature>
<feature type="binding site" evidence="1">
    <location>
        <position position="208"/>
    </location>
    <ligand>
        <name>Zn(2+)</name>
        <dbReference type="ChEBI" id="CHEBI:29105"/>
        <note>catalytic</note>
    </ligand>
</feature>
<feature type="binding site" evidence="1">
    <location>
        <begin position="209"/>
        <end position="211"/>
    </location>
    <ligand>
        <name>dihydroxyacetone phosphate</name>
        <dbReference type="ChEBI" id="CHEBI:57642"/>
    </ligand>
</feature>
<feature type="binding site" evidence="1">
    <location>
        <begin position="230"/>
        <end position="233"/>
    </location>
    <ligand>
        <name>dihydroxyacetone phosphate</name>
        <dbReference type="ChEBI" id="CHEBI:57642"/>
    </ligand>
</feature>
<dbReference type="EC" id="4.1.2.40" evidence="1"/>
<dbReference type="EMBL" id="AE005674">
    <property type="protein sequence ID" value="AAN43691.2"/>
    <property type="molecule type" value="Genomic_DNA"/>
</dbReference>
<dbReference type="EMBL" id="AE014073">
    <property type="protein sequence ID" value="AAP17517.1"/>
    <property type="molecule type" value="Genomic_DNA"/>
</dbReference>
<dbReference type="RefSeq" id="NP_707984.2">
    <property type="nucleotide sequence ID" value="NC_004337.2"/>
</dbReference>
<dbReference type="RefSeq" id="WP_005049088.1">
    <property type="nucleotide sequence ID" value="NZ_WPGW01000098.1"/>
</dbReference>
<dbReference type="SMR" id="Q83QY5"/>
<dbReference type="STRING" id="198214.SF2158"/>
<dbReference type="PaxDb" id="198214-SF2158"/>
<dbReference type="GeneID" id="1027326"/>
<dbReference type="KEGG" id="sfl:SF2158"/>
<dbReference type="KEGG" id="sfx:S2284"/>
<dbReference type="PATRIC" id="fig|198214.7.peg.2573"/>
<dbReference type="HOGENOM" id="CLU_040088_0_1_6"/>
<dbReference type="UniPathway" id="UPA00704">
    <property type="reaction ID" value="UER00716"/>
</dbReference>
<dbReference type="Proteomes" id="UP000001006">
    <property type="component" value="Chromosome"/>
</dbReference>
<dbReference type="Proteomes" id="UP000002673">
    <property type="component" value="Chromosome"/>
</dbReference>
<dbReference type="GO" id="GO:0005829">
    <property type="term" value="C:cytosol"/>
    <property type="evidence" value="ECO:0007669"/>
    <property type="project" value="TreeGrafter"/>
</dbReference>
<dbReference type="GO" id="GO:0009025">
    <property type="term" value="F:tagatose-bisphosphate aldolase activity"/>
    <property type="evidence" value="ECO:0007669"/>
    <property type="project" value="UniProtKB-UniRule"/>
</dbReference>
<dbReference type="GO" id="GO:0008270">
    <property type="term" value="F:zinc ion binding"/>
    <property type="evidence" value="ECO:0007669"/>
    <property type="project" value="UniProtKB-UniRule"/>
</dbReference>
<dbReference type="GO" id="GO:2001059">
    <property type="term" value="P:D-tagatose 6-phosphate catabolic process"/>
    <property type="evidence" value="ECO:0007669"/>
    <property type="project" value="UniProtKB-UniRule"/>
</dbReference>
<dbReference type="GO" id="GO:0019404">
    <property type="term" value="P:galactitol catabolic process"/>
    <property type="evidence" value="ECO:0007669"/>
    <property type="project" value="InterPro"/>
</dbReference>
<dbReference type="CDD" id="cd00947">
    <property type="entry name" value="TBP_aldolase_IIB"/>
    <property type="match status" value="1"/>
</dbReference>
<dbReference type="FunFam" id="3.20.20.70:FF:000043">
    <property type="entry name" value="D-tagatose-1,6-bisphosphate aldolase subunit GatY"/>
    <property type="match status" value="1"/>
</dbReference>
<dbReference type="Gene3D" id="3.20.20.70">
    <property type="entry name" value="Aldolase class I"/>
    <property type="match status" value="1"/>
</dbReference>
<dbReference type="HAMAP" id="MF_01294">
    <property type="entry name" value="TagBP_aldolase_GatY"/>
    <property type="match status" value="1"/>
</dbReference>
<dbReference type="InterPro" id="IPR013785">
    <property type="entry name" value="Aldolase_TIM"/>
</dbReference>
<dbReference type="InterPro" id="IPR050246">
    <property type="entry name" value="Class_II_FBP_aldolase"/>
</dbReference>
<dbReference type="InterPro" id="IPR000771">
    <property type="entry name" value="FBA_II"/>
</dbReference>
<dbReference type="InterPro" id="IPR011288">
    <property type="entry name" value="TagBP_ald_KbaY/GatY"/>
</dbReference>
<dbReference type="InterPro" id="IPR023955">
    <property type="entry name" value="TagBP_aldolase_GatY"/>
</dbReference>
<dbReference type="NCBIfam" id="TIGR00167">
    <property type="entry name" value="cbbA"/>
    <property type="match status" value="1"/>
</dbReference>
<dbReference type="NCBIfam" id="NF006626">
    <property type="entry name" value="PRK09195.1"/>
    <property type="match status" value="1"/>
</dbReference>
<dbReference type="NCBIfam" id="NF009374">
    <property type="entry name" value="PRK12737.1"/>
    <property type="match status" value="1"/>
</dbReference>
<dbReference type="NCBIfam" id="TIGR01858">
    <property type="entry name" value="tag_bisphos_ald"/>
    <property type="match status" value="1"/>
</dbReference>
<dbReference type="PANTHER" id="PTHR30304">
    <property type="entry name" value="D-TAGATOSE-1,6-BISPHOSPHATE ALDOLASE"/>
    <property type="match status" value="1"/>
</dbReference>
<dbReference type="PANTHER" id="PTHR30304:SF0">
    <property type="entry name" value="D-TAGATOSE-1,6-BISPHOSPHATE ALDOLASE SUBUNIT GATY-RELATED"/>
    <property type="match status" value="1"/>
</dbReference>
<dbReference type="Pfam" id="PF01116">
    <property type="entry name" value="F_bP_aldolase"/>
    <property type="match status" value="1"/>
</dbReference>
<dbReference type="PIRSF" id="PIRSF001359">
    <property type="entry name" value="F_bP_aldolase_II"/>
    <property type="match status" value="1"/>
</dbReference>
<dbReference type="SUPFAM" id="SSF51569">
    <property type="entry name" value="Aldolase"/>
    <property type="match status" value="1"/>
</dbReference>
<dbReference type="PROSITE" id="PS00602">
    <property type="entry name" value="ALDOLASE_CLASS_II_1"/>
    <property type="match status" value="1"/>
</dbReference>
<dbReference type="PROSITE" id="PS00806">
    <property type="entry name" value="ALDOLASE_CLASS_II_2"/>
    <property type="match status" value="1"/>
</dbReference>
<comment type="function">
    <text evidence="1">Catalytic subunit of the tagatose-1,6-bisphosphate aldolase GatYZ, which catalyzes the reversible aldol condensation of dihydroxyacetone phosphate (DHAP or glycerone-phosphate) with glyceraldehyde 3-phosphate (G3P) to produce tagatose 1,6-bisphosphate (TBP). Requires GatZ subunit for full activity and stability. Is involved in the catabolism of galactitol.</text>
</comment>
<comment type="catalytic activity">
    <reaction evidence="1">
        <text>D-tagatofuranose 1,6-bisphosphate = D-glyceraldehyde 3-phosphate + dihydroxyacetone phosphate</text>
        <dbReference type="Rhea" id="RHEA:22948"/>
        <dbReference type="ChEBI" id="CHEBI:57642"/>
        <dbReference type="ChEBI" id="CHEBI:58694"/>
        <dbReference type="ChEBI" id="CHEBI:59776"/>
        <dbReference type="EC" id="4.1.2.40"/>
    </reaction>
</comment>
<comment type="cofactor">
    <cofactor evidence="1">
        <name>Zn(2+)</name>
        <dbReference type="ChEBI" id="CHEBI:29105"/>
    </cofactor>
    <text evidence="1">Binds 1 zinc ion per subunit.</text>
</comment>
<comment type="pathway">
    <text evidence="1">Carbohydrate metabolism; D-tagatose 6-phosphate degradation; D-glyceraldehyde 3-phosphate and glycerone phosphate from D-tagatose 6-phosphate: step 2/2.</text>
</comment>
<comment type="subunit">
    <text evidence="1">Forms a complex with GatZ.</text>
</comment>
<comment type="similarity">
    <text evidence="1">Belongs to the class II fructose-bisphosphate aldolase family. TagBP aldolase GatY subfamily.</text>
</comment>
<gene>
    <name evidence="1" type="primary">gatY</name>
    <name type="ordered locus">SF2158</name>
    <name type="ordered locus">S2284</name>
</gene>
<proteinExistence type="inferred from homology"/>
<accession>Q83QY5</accession>
<accession>Q7UCA8</accession>